<name>QUEA_STRP4</name>
<reference key="1">
    <citation type="journal article" date="2001" name="Microb. Drug Resist.">
        <title>Annotated draft genomic sequence from a Streptococcus pneumoniae type 19F clinical isolate.</title>
        <authorList>
            <person name="Dopazo J."/>
            <person name="Mendoza A."/>
            <person name="Herrero J."/>
            <person name="Caldara F."/>
            <person name="Humbert Y."/>
            <person name="Friedli L."/>
            <person name="Guerrier M."/>
            <person name="Grand-Schenk E."/>
            <person name="Gandin C."/>
            <person name="de Francesco M."/>
            <person name="Polissi A."/>
            <person name="Buell G."/>
            <person name="Feger G."/>
            <person name="Garcia E."/>
            <person name="Peitsch M."/>
            <person name="Garcia-Bustos J.F."/>
        </authorList>
    </citation>
    <scope>NUCLEOTIDE SEQUENCE [LARGE SCALE GENOMIC DNA]</scope>
    <source>
        <strain>G54</strain>
    </source>
</reference>
<reference key="2">
    <citation type="submission" date="2008-03" db="EMBL/GenBank/DDBJ databases">
        <title>Pneumococcal beta glucoside metabolism investigated by whole genome comparison.</title>
        <authorList>
            <person name="Mulas L."/>
            <person name="Trappetti C."/>
            <person name="Hakenbeck R."/>
            <person name="Iannelli F."/>
            <person name="Pozzi G."/>
            <person name="Davidsen T.M."/>
            <person name="Tettelin H."/>
            <person name="Oggioni M."/>
        </authorList>
    </citation>
    <scope>NUCLEOTIDE SEQUENCE [LARGE SCALE GENOMIC DNA]</scope>
    <source>
        <strain>G54</strain>
    </source>
</reference>
<gene>
    <name evidence="1" type="primary">queA</name>
    <name type="ordered locus">SPG_1357</name>
</gene>
<sequence>MNTADFDFHLPEELIAQTPLEKRDASKLLIVNRETGEMQDKHFHSIIDMLEPGDALVMNDTRVLPARLYGQKVETGGHVELLLLKNTSGDXWEVLAKPAKRLKVGTRISFGDGRLSAVVTEELTHGGRIVRFEYQGIFLEVLESLGEMPLPPYIHEKLDDRERYQTVYAKESGSAAAPTAGLHFTKELLAEIQAKGVHLVYLTLHVGLGTFRPVSVDNLDEHEMHSEFYQLSEEAAATLRSVKENGGRVIAVGTTSIRTLETIGSKFDGQIQADSGWTNIFIKPGYEWKVVDAFSTNFHLPKSTLVMLVSAFAGRELVLDAYHHAIQEHYRFFSFGDAMFIY</sequence>
<dbReference type="EC" id="2.4.99.17" evidence="1"/>
<dbReference type="EMBL" id="CP001015">
    <property type="protein sequence ID" value="ACF55713.1"/>
    <property type="molecule type" value="Genomic_DNA"/>
</dbReference>
<dbReference type="KEGG" id="spx:SPG_1357"/>
<dbReference type="HOGENOM" id="CLU_039110_1_0_9"/>
<dbReference type="UniPathway" id="UPA00392"/>
<dbReference type="GO" id="GO:0005737">
    <property type="term" value="C:cytoplasm"/>
    <property type="evidence" value="ECO:0007669"/>
    <property type="project" value="UniProtKB-SubCell"/>
</dbReference>
<dbReference type="GO" id="GO:0051075">
    <property type="term" value="F:S-adenosylmethionine:tRNA ribosyltransferase-isomerase activity"/>
    <property type="evidence" value="ECO:0007669"/>
    <property type="project" value="UniProtKB-EC"/>
</dbReference>
<dbReference type="GO" id="GO:0008616">
    <property type="term" value="P:queuosine biosynthetic process"/>
    <property type="evidence" value="ECO:0007669"/>
    <property type="project" value="UniProtKB-UniRule"/>
</dbReference>
<dbReference type="GO" id="GO:0002099">
    <property type="term" value="P:tRNA wobble guanine modification"/>
    <property type="evidence" value="ECO:0007669"/>
    <property type="project" value="TreeGrafter"/>
</dbReference>
<dbReference type="FunFam" id="2.40.10.240:FF:000002">
    <property type="entry name" value="S-adenosylmethionine:tRNA ribosyltransferase-isomerase"/>
    <property type="match status" value="1"/>
</dbReference>
<dbReference type="FunFam" id="3.40.1780.10:FF:000001">
    <property type="entry name" value="S-adenosylmethionine:tRNA ribosyltransferase-isomerase"/>
    <property type="match status" value="1"/>
</dbReference>
<dbReference type="Gene3D" id="2.40.10.240">
    <property type="entry name" value="QueA-like"/>
    <property type="match status" value="1"/>
</dbReference>
<dbReference type="Gene3D" id="3.40.1780.10">
    <property type="entry name" value="QueA-like"/>
    <property type="match status" value="1"/>
</dbReference>
<dbReference type="HAMAP" id="MF_00113">
    <property type="entry name" value="QueA"/>
    <property type="match status" value="1"/>
</dbReference>
<dbReference type="InterPro" id="IPR003699">
    <property type="entry name" value="QueA"/>
</dbReference>
<dbReference type="InterPro" id="IPR042118">
    <property type="entry name" value="QueA_dom1"/>
</dbReference>
<dbReference type="InterPro" id="IPR042119">
    <property type="entry name" value="QueA_dom2"/>
</dbReference>
<dbReference type="InterPro" id="IPR036100">
    <property type="entry name" value="QueA_sf"/>
</dbReference>
<dbReference type="NCBIfam" id="NF001140">
    <property type="entry name" value="PRK00147.1"/>
    <property type="match status" value="1"/>
</dbReference>
<dbReference type="NCBIfam" id="TIGR00113">
    <property type="entry name" value="queA"/>
    <property type="match status" value="1"/>
</dbReference>
<dbReference type="PANTHER" id="PTHR30307">
    <property type="entry name" value="S-ADENOSYLMETHIONINE:TRNA RIBOSYLTRANSFERASE-ISOMERASE"/>
    <property type="match status" value="1"/>
</dbReference>
<dbReference type="PANTHER" id="PTHR30307:SF0">
    <property type="entry name" value="S-ADENOSYLMETHIONINE:TRNA RIBOSYLTRANSFERASE-ISOMERASE"/>
    <property type="match status" value="1"/>
</dbReference>
<dbReference type="Pfam" id="PF02547">
    <property type="entry name" value="Queuosine_synth"/>
    <property type="match status" value="1"/>
</dbReference>
<dbReference type="SUPFAM" id="SSF111337">
    <property type="entry name" value="QueA-like"/>
    <property type="match status" value="1"/>
</dbReference>
<evidence type="ECO:0000255" key="1">
    <source>
        <dbReference type="HAMAP-Rule" id="MF_00113"/>
    </source>
</evidence>
<comment type="function">
    <text evidence="1">Transfers and isomerizes the ribose moiety from AdoMet to the 7-aminomethyl group of 7-deazaguanine (preQ1-tRNA) to give epoxyqueuosine (oQ-tRNA).</text>
</comment>
<comment type="catalytic activity">
    <reaction evidence="1">
        <text>7-aminomethyl-7-carbaguanosine(34) in tRNA + S-adenosyl-L-methionine = epoxyqueuosine(34) in tRNA + adenine + L-methionine + 2 H(+)</text>
        <dbReference type="Rhea" id="RHEA:32155"/>
        <dbReference type="Rhea" id="RHEA-COMP:10342"/>
        <dbReference type="Rhea" id="RHEA-COMP:18582"/>
        <dbReference type="ChEBI" id="CHEBI:15378"/>
        <dbReference type="ChEBI" id="CHEBI:16708"/>
        <dbReference type="ChEBI" id="CHEBI:57844"/>
        <dbReference type="ChEBI" id="CHEBI:59789"/>
        <dbReference type="ChEBI" id="CHEBI:82833"/>
        <dbReference type="ChEBI" id="CHEBI:194443"/>
        <dbReference type="EC" id="2.4.99.17"/>
    </reaction>
</comment>
<comment type="pathway">
    <text evidence="1">tRNA modification; tRNA-queuosine biosynthesis.</text>
</comment>
<comment type="subunit">
    <text evidence="1">Monomer.</text>
</comment>
<comment type="subcellular location">
    <subcellularLocation>
        <location evidence="1">Cytoplasm</location>
    </subcellularLocation>
</comment>
<comment type="similarity">
    <text evidence="1">Belongs to the QueA family.</text>
</comment>
<organism>
    <name type="scientific">Streptococcus pneumoniae serotype 19F (strain G54)</name>
    <dbReference type="NCBI Taxonomy" id="512566"/>
    <lineage>
        <taxon>Bacteria</taxon>
        <taxon>Bacillati</taxon>
        <taxon>Bacillota</taxon>
        <taxon>Bacilli</taxon>
        <taxon>Lactobacillales</taxon>
        <taxon>Streptococcaceae</taxon>
        <taxon>Streptococcus</taxon>
    </lineage>
</organism>
<feature type="chain" id="PRO_1000094820" description="S-adenosylmethionine:tRNA ribosyltransferase-isomerase">
    <location>
        <begin position="1"/>
        <end position="342"/>
    </location>
</feature>
<accession>B5E5S4</accession>
<protein>
    <recommendedName>
        <fullName evidence="1">S-adenosylmethionine:tRNA ribosyltransferase-isomerase</fullName>
        <ecNumber evidence="1">2.4.99.17</ecNumber>
    </recommendedName>
    <alternativeName>
        <fullName evidence="1">Queuosine biosynthesis protein QueA</fullName>
    </alternativeName>
</protein>
<proteinExistence type="inferred from homology"/>
<keyword id="KW-0963">Cytoplasm</keyword>
<keyword id="KW-0671">Queuosine biosynthesis</keyword>
<keyword id="KW-0949">S-adenosyl-L-methionine</keyword>
<keyword id="KW-0808">Transferase</keyword>